<protein>
    <recommendedName>
        <fullName evidence="1">Glycine--tRNA ligase</fullName>
        <ecNumber evidence="1">6.1.1.14</ecNumber>
    </recommendedName>
    <alternativeName>
        <fullName evidence="1">Glycyl-tRNA synthetase</fullName>
        <shortName evidence="1">GlyRS</shortName>
    </alternativeName>
</protein>
<accession>O27874</accession>
<reference key="1">
    <citation type="journal article" date="1997" name="J. Bacteriol.">
        <title>Complete genome sequence of Methanobacterium thermoautotrophicum deltaH: functional analysis and comparative genomics.</title>
        <authorList>
            <person name="Smith D.R."/>
            <person name="Doucette-Stamm L.A."/>
            <person name="Deloughery C."/>
            <person name="Lee H.-M."/>
            <person name="Dubois J."/>
            <person name="Aldredge T."/>
            <person name="Bashirzadeh R."/>
            <person name="Blakely D."/>
            <person name="Cook R."/>
            <person name="Gilbert K."/>
            <person name="Harrison D."/>
            <person name="Hoang L."/>
            <person name="Keagle P."/>
            <person name="Lumm W."/>
            <person name="Pothier B."/>
            <person name="Qiu D."/>
            <person name="Spadafora R."/>
            <person name="Vicare R."/>
            <person name="Wang Y."/>
            <person name="Wierzbowski J."/>
            <person name="Gibson R."/>
            <person name="Jiwani N."/>
            <person name="Caruso A."/>
            <person name="Bush D."/>
            <person name="Safer H."/>
            <person name="Patwell D."/>
            <person name="Prabhakar S."/>
            <person name="McDougall S."/>
            <person name="Shimer G."/>
            <person name="Goyal A."/>
            <person name="Pietrovski S."/>
            <person name="Church G.M."/>
            <person name="Daniels C.J."/>
            <person name="Mao J.-I."/>
            <person name="Rice P."/>
            <person name="Noelling J."/>
            <person name="Reeve J.N."/>
        </authorList>
    </citation>
    <scope>NUCLEOTIDE SEQUENCE [LARGE SCALE GENOMIC DNA]</scope>
    <source>
        <strain>ATCC 29096 / DSM 1053 / JCM 10044 / NBRC 100330 / Delta H</strain>
    </source>
</reference>
<proteinExistence type="inferred from homology"/>
<keyword id="KW-0030">Aminoacyl-tRNA synthetase</keyword>
<keyword id="KW-0067">ATP-binding</keyword>
<keyword id="KW-0963">Cytoplasm</keyword>
<keyword id="KW-0436">Ligase</keyword>
<keyword id="KW-0547">Nucleotide-binding</keyword>
<keyword id="KW-0648">Protein biosynthesis</keyword>
<keyword id="KW-1185">Reference proteome</keyword>
<gene>
    <name evidence="1" type="primary">glyS</name>
    <name type="ordered locus">MTH_1846</name>
</gene>
<sequence>MINVNHERTMTVARKRGFLWSSFEIYSGVAGFVDYGPLGATLKNKIMNRWREFYVVREGFYEIESPTIMPEEALKASGHVDHFNDPMTQCKECMDVYRADHIIEDATGRDVEGLENQELTEIISDEGIRCPRCGGHLTHVWSYNLMFQTLIGARGKKTGYLRPETAQGIFIPFKRLLRFFRNRLPFGVVQLGKSYRNEISPRQGVIRLREFTQAEAEIFVDPEHKTHPDFEEVKEDILRLYPAGRQMEESGTVDMTAAEALEAGVISSEVLTYHLCLAKRFLMDIGIPEDALRFRQHLPSEMAHYAIDCWDVEAFTDSYGWIEIIGIADRTDYDLRSHSQHSGEDLRVFIEYDEPRRIRKRAVKPDMGKLGPKFRKDAARIASALSEVDVEEIEKALDEEGRFILEGEFEILPDDVSFEDVEEVVTGRKVYPHVIEPSFGIDRIIYTLLLHSLVDDGERTYFRLPPHVAPVEVTVLPLVNREEMVMTALEIERNLRRSGFIAEFDSSGTIGRRYARADEIGVPFAVTVDHETLEDGTVTLRNRDDCSQVRVKIEELVPTLEKLRG</sequence>
<organism>
    <name type="scientific">Methanothermobacter thermautotrophicus (strain ATCC 29096 / DSM 1053 / JCM 10044 / NBRC 100330 / Delta H)</name>
    <name type="common">Methanobacterium thermoautotrophicum</name>
    <dbReference type="NCBI Taxonomy" id="187420"/>
    <lineage>
        <taxon>Archaea</taxon>
        <taxon>Methanobacteriati</taxon>
        <taxon>Methanobacteriota</taxon>
        <taxon>Methanomada group</taxon>
        <taxon>Methanobacteria</taxon>
        <taxon>Methanobacteriales</taxon>
        <taxon>Methanobacteriaceae</taxon>
        <taxon>Methanothermobacter</taxon>
    </lineage>
</organism>
<feature type="chain" id="PRO_0000072993" description="Glycine--tRNA ligase">
    <location>
        <begin position="1"/>
        <end position="565"/>
    </location>
</feature>
<feature type="binding site" evidence="1">
    <location>
        <position position="98"/>
    </location>
    <ligand>
        <name>substrate</name>
    </ligand>
</feature>
<feature type="binding site" evidence="1">
    <location>
        <position position="164"/>
    </location>
    <ligand>
        <name>substrate</name>
    </ligand>
</feature>
<feature type="binding site" evidence="1">
    <location>
        <begin position="196"/>
        <end position="198"/>
    </location>
    <ligand>
        <name>ATP</name>
        <dbReference type="ChEBI" id="CHEBI:30616"/>
    </ligand>
</feature>
<feature type="binding site" evidence="1">
    <location>
        <begin position="206"/>
        <end position="211"/>
    </location>
    <ligand>
        <name>ATP</name>
        <dbReference type="ChEBI" id="CHEBI:30616"/>
    </ligand>
</feature>
<feature type="binding site" evidence="1">
    <location>
        <begin position="211"/>
        <end position="215"/>
    </location>
    <ligand>
        <name>substrate</name>
    </ligand>
</feature>
<feature type="binding site" evidence="1">
    <location>
        <begin position="323"/>
        <end position="324"/>
    </location>
    <ligand>
        <name>ATP</name>
        <dbReference type="ChEBI" id="CHEBI:30616"/>
    </ligand>
</feature>
<feature type="binding site" evidence="1">
    <location>
        <begin position="436"/>
        <end position="440"/>
    </location>
    <ligand>
        <name>substrate</name>
    </ligand>
</feature>
<feature type="binding site" evidence="1">
    <location>
        <begin position="440"/>
        <end position="443"/>
    </location>
    <ligand>
        <name>ATP</name>
        <dbReference type="ChEBI" id="CHEBI:30616"/>
    </ligand>
</feature>
<evidence type="ECO:0000255" key="1">
    <source>
        <dbReference type="HAMAP-Rule" id="MF_00253"/>
    </source>
</evidence>
<dbReference type="EC" id="6.1.1.14" evidence="1"/>
<dbReference type="EMBL" id="AE000666">
    <property type="protein sequence ID" value="AAB86312.1"/>
    <property type="molecule type" value="Genomic_DNA"/>
</dbReference>
<dbReference type="PIR" id="H69113">
    <property type="entry name" value="H69113"/>
</dbReference>
<dbReference type="SMR" id="O27874"/>
<dbReference type="FunCoup" id="O27874">
    <property type="interactions" value="196"/>
</dbReference>
<dbReference type="STRING" id="187420.MTH_1846"/>
<dbReference type="PaxDb" id="187420-MTH_1846"/>
<dbReference type="EnsemblBacteria" id="AAB86312">
    <property type="protein sequence ID" value="AAB86312"/>
    <property type="gene ID" value="MTH_1846"/>
</dbReference>
<dbReference type="KEGG" id="mth:MTH_1846"/>
<dbReference type="PATRIC" id="fig|187420.15.peg.1800"/>
<dbReference type="HOGENOM" id="CLU_015515_1_2_2"/>
<dbReference type="InParanoid" id="O27874"/>
<dbReference type="Proteomes" id="UP000005223">
    <property type="component" value="Chromosome"/>
</dbReference>
<dbReference type="GO" id="GO:0005737">
    <property type="term" value="C:cytoplasm"/>
    <property type="evidence" value="ECO:0007669"/>
    <property type="project" value="UniProtKB-SubCell"/>
</dbReference>
<dbReference type="GO" id="GO:0005524">
    <property type="term" value="F:ATP binding"/>
    <property type="evidence" value="ECO:0007669"/>
    <property type="project" value="UniProtKB-UniRule"/>
</dbReference>
<dbReference type="GO" id="GO:0004820">
    <property type="term" value="F:glycine-tRNA ligase activity"/>
    <property type="evidence" value="ECO:0000250"/>
    <property type="project" value="UniProtKB"/>
</dbReference>
<dbReference type="GO" id="GO:0046983">
    <property type="term" value="F:protein dimerization activity"/>
    <property type="evidence" value="ECO:0000250"/>
    <property type="project" value="UniProtKB"/>
</dbReference>
<dbReference type="GO" id="GO:0006426">
    <property type="term" value="P:glycyl-tRNA aminoacylation"/>
    <property type="evidence" value="ECO:0007669"/>
    <property type="project" value="UniProtKB-UniRule"/>
</dbReference>
<dbReference type="CDD" id="cd00774">
    <property type="entry name" value="GlyRS-like_core"/>
    <property type="match status" value="1"/>
</dbReference>
<dbReference type="CDD" id="cd00858">
    <property type="entry name" value="GlyRS_anticodon"/>
    <property type="match status" value="1"/>
</dbReference>
<dbReference type="FunFam" id="3.30.40.230:FF:000005">
    <property type="entry name" value="Glycine--tRNA ligase"/>
    <property type="match status" value="1"/>
</dbReference>
<dbReference type="Gene3D" id="3.30.40.230">
    <property type="match status" value="1"/>
</dbReference>
<dbReference type="Gene3D" id="3.30.720.200">
    <property type="match status" value="1"/>
</dbReference>
<dbReference type="Gene3D" id="3.40.50.800">
    <property type="entry name" value="Anticodon-binding domain"/>
    <property type="match status" value="1"/>
</dbReference>
<dbReference type="Gene3D" id="3.30.930.10">
    <property type="entry name" value="Bira Bifunctional Protein, Domain 2"/>
    <property type="match status" value="1"/>
</dbReference>
<dbReference type="HAMAP" id="MF_00253_A">
    <property type="entry name" value="Gly_tRNA_synth_A"/>
    <property type="match status" value="1"/>
</dbReference>
<dbReference type="InterPro" id="IPR002314">
    <property type="entry name" value="aa-tRNA-synt_IIb"/>
</dbReference>
<dbReference type="InterPro" id="IPR006195">
    <property type="entry name" value="aa-tRNA-synth_II"/>
</dbReference>
<dbReference type="InterPro" id="IPR045864">
    <property type="entry name" value="aa-tRNA-synth_II/BPL/LPL"/>
</dbReference>
<dbReference type="InterPro" id="IPR004154">
    <property type="entry name" value="Anticodon-bd"/>
</dbReference>
<dbReference type="InterPro" id="IPR036621">
    <property type="entry name" value="Anticodon-bd_dom_sf"/>
</dbReference>
<dbReference type="InterPro" id="IPR027031">
    <property type="entry name" value="Gly-tRNA_synthase/POLG2"/>
</dbReference>
<dbReference type="InterPro" id="IPR022960">
    <property type="entry name" value="Gly_tRNA_ligase_arc"/>
</dbReference>
<dbReference type="InterPro" id="IPR033731">
    <property type="entry name" value="GlyRS-like_core"/>
</dbReference>
<dbReference type="InterPro" id="IPR002315">
    <property type="entry name" value="tRNA-synt_gly"/>
</dbReference>
<dbReference type="NCBIfam" id="TIGR00389">
    <property type="entry name" value="glyS_dimeric"/>
    <property type="match status" value="1"/>
</dbReference>
<dbReference type="NCBIfam" id="NF003211">
    <property type="entry name" value="PRK04173.1"/>
    <property type="match status" value="1"/>
</dbReference>
<dbReference type="PANTHER" id="PTHR10745:SF0">
    <property type="entry name" value="GLYCINE--TRNA LIGASE"/>
    <property type="match status" value="1"/>
</dbReference>
<dbReference type="PANTHER" id="PTHR10745">
    <property type="entry name" value="GLYCYL-TRNA SYNTHETASE/DNA POLYMERASE SUBUNIT GAMMA-2"/>
    <property type="match status" value="1"/>
</dbReference>
<dbReference type="Pfam" id="PF03129">
    <property type="entry name" value="HGTP_anticodon"/>
    <property type="match status" value="1"/>
</dbReference>
<dbReference type="Pfam" id="PF00587">
    <property type="entry name" value="tRNA-synt_2b"/>
    <property type="match status" value="1"/>
</dbReference>
<dbReference type="PRINTS" id="PR01043">
    <property type="entry name" value="TRNASYNTHGLY"/>
</dbReference>
<dbReference type="SUPFAM" id="SSF52954">
    <property type="entry name" value="Class II aaRS ABD-related"/>
    <property type="match status" value="1"/>
</dbReference>
<dbReference type="SUPFAM" id="SSF55681">
    <property type="entry name" value="Class II aaRS and biotin synthetases"/>
    <property type="match status" value="1"/>
</dbReference>
<dbReference type="PROSITE" id="PS50862">
    <property type="entry name" value="AA_TRNA_LIGASE_II"/>
    <property type="match status" value="1"/>
</dbReference>
<comment type="function">
    <text evidence="1">Catalyzes the attachment of glycine to tRNA(Gly).</text>
</comment>
<comment type="catalytic activity">
    <reaction evidence="1">
        <text>tRNA(Gly) + glycine + ATP = glycyl-tRNA(Gly) + AMP + diphosphate</text>
        <dbReference type="Rhea" id="RHEA:16013"/>
        <dbReference type="Rhea" id="RHEA-COMP:9664"/>
        <dbReference type="Rhea" id="RHEA-COMP:9683"/>
        <dbReference type="ChEBI" id="CHEBI:30616"/>
        <dbReference type="ChEBI" id="CHEBI:33019"/>
        <dbReference type="ChEBI" id="CHEBI:57305"/>
        <dbReference type="ChEBI" id="CHEBI:78442"/>
        <dbReference type="ChEBI" id="CHEBI:78522"/>
        <dbReference type="ChEBI" id="CHEBI:456215"/>
        <dbReference type="EC" id="6.1.1.14"/>
    </reaction>
</comment>
<comment type="subcellular location">
    <subcellularLocation>
        <location evidence="1">Cytoplasm</location>
    </subcellularLocation>
</comment>
<comment type="similarity">
    <text evidence="1">Belongs to the class-II aminoacyl-tRNA synthetase family.</text>
</comment>
<name>SYG_METTH</name>